<dbReference type="EMBL" id="CM001234">
    <property type="protein sequence ID" value="EHA50817.1"/>
    <property type="molecule type" value="Genomic_DNA"/>
</dbReference>
<dbReference type="RefSeq" id="XP_003717136.1">
    <property type="nucleotide sequence ID" value="XM_003717088.1"/>
</dbReference>
<dbReference type="STRING" id="242507.Q52E73"/>
<dbReference type="EnsemblFungi" id="MGG_06433T0">
    <property type="protein sequence ID" value="MGG_06433T0"/>
    <property type="gene ID" value="MGG_06433"/>
</dbReference>
<dbReference type="GeneID" id="2684588"/>
<dbReference type="KEGG" id="mgr:MGG_06433"/>
<dbReference type="VEuPathDB" id="FungiDB:MGG_06433"/>
<dbReference type="eggNOG" id="ENOG502RZY8">
    <property type="taxonomic scope" value="Eukaryota"/>
</dbReference>
<dbReference type="HOGENOM" id="CLU_047291_1_0_1"/>
<dbReference type="InParanoid" id="Q52E73"/>
<dbReference type="OMA" id="AWGKSAM"/>
<dbReference type="OrthoDB" id="5577072at2759"/>
<dbReference type="Proteomes" id="UP000009058">
    <property type="component" value="Chromosome 4"/>
</dbReference>
<dbReference type="GO" id="GO:0005681">
    <property type="term" value="C:spliceosomal complex"/>
    <property type="evidence" value="ECO:0007669"/>
    <property type="project" value="UniProtKB-KW"/>
</dbReference>
<dbReference type="GO" id="GO:0000398">
    <property type="term" value="P:mRNA splicing, via spliceosome"/>
    <property type="evidence" value="ECO:0007669"/>
    <property type="project" value="InterPro"/>
</dbReference>
<dbReference type="InterPro" id="IPR045166">
    <property type="entry name" value="Spp2-like"/>
</dbReference>
<dbReference type="InterPro" id="IPR026822">
    <property type="entry name" value="Spp2/MOS2_G-patch"/>
</dbReference>
<dbReference type="PANTHER" id="PTHR15818">
    <property type="entry name" value="G PATCH AND KOW-CONTAINING"/>
    <property type="match status" value="1"/>
</dbReference>
<dbReference type="PANTHER" id="PTHR15818:SF2">
    <property type="entry name" value="G-PATCH DOMAIN AND KOW MOTIFS-CONTAINING PROTEIN"/>
    <property type="match status" value="1"/>
</dbReference>
<dbReference type="Pfam" id="PF12656">
    <property type="entry name" value="G-patch_2"/>
    <property type="match status" value="1"/>
</dbReference>
<reference key="1">
    <citation type="journal article" date="2005" name="Nature">
        <title>The genome sequence of the rice blast fungus Magnaporthe grisea.</title>
        <authorList>
            <person name="Dean R.A."/>
            <person name="Talbot N.J."/>
            <person name="Ebbole D.J."/>
            <person name="Farman M.L."/>
            <person name="Mitchell T.K."/>
            <person name="Orbach M.J."/>
            <person name="Thon M.R."/>
            <person name="Kulkarni R."/>
            <person name="Xu J.-R."/>
            <person name="Pan H."/>
            <person name="Read N.D."/>
            <person name="Lee Y.-H."/>
            <person name="Carbone I."/>
            <person name="Brown D."/>
            <person name="Oh Y.Y."/>
            <person name="Donofrio N."/>
            <person name="Jeong J.S."/>
            <person name="Soanes D.M."/>
            <person name="Djonovic S."/>
            <person name="Kolomiets E."/>
            <person name="Rehmeyer C."/>
            <person name="Li W."/>
            <person name="Harding M."/>
            <person name="Kim S."/>
            <person name="Lebrun M.-H."/>
            <person name="Bohnert H."/>
            <person name="Coughlan S."/>
            <person name="Butler J."/>
            <person name="Calvo S.E."/>
            <person name="Ma L.-J."/>
            <person name="Nicol R."/>
            <person name="Purcell S."/>
            <person name="Nusbaum C."/>
            <person name="Galagan J.E."/>
            <person name="Birren B.W."/>
        </authorList>
    </citation>
    <scope>NUCLEOTIDE SEQUENCE [LARGE SCALE GENOMIC DNA]</scope>
    <source>
        <strain>70-15 / ATCC MYA-4617 / FGSC 8958</strain>
    </source>
</reference>
<keyword id="KW-0507">mRNA processing</keyword>
<keyword id="KW-0508">mRNA splicing</keyword>
<keyword id="KW-0539">Nucleus</keyword>
<keyword id="KW-1185">Reference proteome</keyword>
<keyword id="KW-0747">Spliceosome</keyword>
<proteinExistence type="inferred from homology"/>
<comment type="function">
    <text evidence="1">Involved in spliceosome maturation and the first step of pre-mRNA splicing.</text>
</comment>
<comment type="subunit">
    <text evidence="1">Associated with the spliceosome.</text>
</comment>
<comment type="subcellular location">
    <subcellularLocation>
        <location evidence="1">Nucleus</location>
    </subcellularLocation>
</comment>
<comment type="similarity">
    <text evidence="3">Belongs to the SPP2 family.</text>
</comment>
<accession>Q52E73</accession>
<accession>A4R8M1</accession>
<accession>G4N7A7</accession>
<feature type="chain" id="PRO_0000218525" description="Pre-mRNA-splicing factor SPP2">
    <location>
        <begin position="1"/>
        <end position="347"/>
    </location>
</feature>
<feature type="region of interest" description="Disordered" evidence="2">
    <location>
        <begin position="1"/>
        <end position="219"/>
    </location>
</feature>
<feature type="region of interest" description="Disordered" evidence="2">
    <location>
        <begin position="231"/>
        <end position="310"/>
    </location>
</feature>
<feature type="compositionally biased region" description="Basic and acidic residues" evidence="2">
    <location>
        <begin position="50"/>
        <end position="59"/>
    </location>
</feature>
<feature type="compositionally biased region" description="Basic and acidic residues" evidence="2">
    <location>
        <begin position="88"/>
        <end position="98"/>
    </location>
</feature>
<feature type="compositionally biased region" description="Basic and acidic residues" evidence="2">
    <location>
        <begin position="128"/>
        <end position="137"/>
    </location>
</feature>
<feature type="compositionally biased region" description="Basic and acidic residues" evidence="2">
    <location>
        <begin position="152"/>
        <end position="166"/>
    </location>
</feature>
<feature type="compositionally biased region" description="Basic and acidic residues" evidence="2">
    <location>
        <begin position="194"/>
        <end position="209"/>
    </location>
</feature>
<feature type="compositionally biased region" description="Basic and acidic residues" evidence="2">
    <location>
        <begin position="282"/>
        <end position="310"/>
    </location>
</feature>
<name>SPP2_PYRO7</name>
<gene>
    <name type="primary">SPP2</name>
    <name type="ORF">MGG_06433</name>
</gene>
<evidence type="ECO:0000250" key="1"/>
<evidence type="ECO:0000256" key="2">
    <source>
        <dbReference type="SAM" id="MobiDB-lite"/>
    </source>
</evidence>
<evidence type="ECO:0000305" key="3"/>
<sequence length="347" mass="38297">MSDKDPANSRIAIKFGASKAPLRPSPASALGKRARPHLLGGNASDSESDGEGRPADRAENITTIGAGADGRGRDTGSSKKPLTIPRQANRDWKSEKRARTNTTSTRQQADKEVEPVDQGKPLKWGLTLKEKGAKATEDAGGQAGEASTDQSDADKGADAKPEKTADEEAMEALLDEREDKKKRNLVIARAESAGAKEEEAFKQNFRDAPDVSTLEDYEEMPVEEFGAALLRGMGWDGKPRGPKTKDVKRRPNQMGLGAKDLKGQEDLGAWDQKGSSRSRPKRLNDYKREERERQDKRSHRGSESYKQERDRERYAAVYLGLCGRSRPSTGHRFMYGNAKISRQLMKD</sequence>
<organism>
    <name type="scientific">Pyricularia oryzae (strain 70-15 / ATCC MYA-4617 / FGSC 8958)</name>
    <name type="common">Rice blast fungus</name>
    <name type="synonym">Magnaporthe oryzae</name>
    <dbReference type="NCBI Taxonomy" id="242507"/>
    <lineage>
        <taxon>Eukaryota</taxon>
        <taxon>Fungi</taxon>
        <taxon>Dikarya</taxon>
        <taxon>Ascomycota</taxon>
        <taxon>Pezizomycotina</taxon>
        <taxon>Sordariomycetes</taxon>
        <taxon>Sordariomycetidae</taxon>
        <taxon>Magnaporthales</taxon>
        <taxon>Pyriculariaceae</taxon>
        <taxon>Pyricularia</taxon>
    </lineage>
</organism>
<protein>
    <recommendedName>
        <fullName>Pre-mRNA-splicing factor SPP2</fullName>
    </recommendedName>
</protein>